<comment type="function">
    <text evidence="1">May be involved in the modulation of rDNA transcription.</text>
</comment>
<comment type="similarity">
    <text evidence="4">Belongs to the RRT5 family.</text>
</comment>
<accession>Q75AP6</accession>
<protein>
    <recommendedName>
        <fullName>Regulator of rDNA transcription protein 5</fullName>
    </recommendedName>
</protein>
<dbReference type="EMBL" id="AE016817">
    <property type="protein sequence ID" value="AAS51794.1"/>
    <property type="molecule type" value="Genomic_DNA"/>
</dbReference>
<dbReference type="RefSeq" id="NP_983970.1">
    <property type="nucleotide sequence ID" value="NM_209323.1"/>
</dbReference>
<dbReference type="FunCoup" id="Q75AP6">
    <property type="interactions" value="203"/>
</dbReference>
<dbReference type="STRING" id="284811.Q75AP6"/>
<dbReference type="EnsemblFungi" id="AAS51794">
    <property type="protein sequence ID" value="AAS51794"/>
    <property type="gene ID" value="AGOS_ADL126C"/>
</dbReference>
<dbReference type="GeneID" id="4620113"/>
<dbReference type="KEGG" id="ago:AGOS_ADL126C"/>
<dbReference type="eggNOG" id="ENOG502RZDM">
    <property type="taxonomic scope" value="Eukaryota"/>
</dbReference>
<dbReference type="HOGENOM" id="CLU_586559_0_0_1"/>
<dbReference type="InParanoid" id="Q75AP6"/>
<dbReference type="OrthoDB" id="439808at2759"/>
<dbReference type="Proteomes" id="UP000000591">
    <property type="component" value="Chromosome IV"/>
</dbReference>
<dbReference type="GO" id="GO:0005737">
    <property type="term" value="C:cytoplasm"/>
    <property type="evidence" value="ECO:0000318"/>
    <property type="project" value="GO_Central"/>
</dbReference>
<dbReference type="GO" id="GO:0005634">
    <property type="term" value="C:nucleus"/>
    <property type="evidence" value="ECO:0000318"/>
    <property type="project" value="GO_Central"/>
</dbReference>
<dbReference type="GO" id="GO:1990904">
    <property type="term" value="C:ribonucleoprotein complex"/>
    <property type="evidence" value="ECO:0000318"/>
    <property type="project" value="GO_Central"/>
</dbReference>
<dbReference type="GO" id="GO:0003729">
    <property type="term" value="F:mRNA binding"/>
    <property type="evidence" value="ECO:0000318"/>
    <property type="project" value="GO_Central"/>
</dbReference>
<dbReference type="CDD" id="cd12409">
    <property type="entry name" value="RRM1_RRT5"/>
    <property type="match status" value="1"/>
</dbReference>
<dbReference type="CDD" id="cd12410">
    <property type="entry name" value="RRM2_RRT5"/>
    <property type="match status" value="1"/>
</dbReference>
<dbReference type="Gene3D" id="3.30.70.330">
    <property type="match status" value="2"/>
</dbReference>
<dbReference type="InterPro" id="IPR012677">
    <property type="entry name" value="Nucleotide-bd_a/b_plait_sf"/>
</dbReference>
<dbReference type="InterPro" id="IPR035979">
    <property type="entry name" value="RBD_domain_sf"/>
</dbReference>
<dbReference type="InterPro" id="IPR000504">
    <property type="entry name" value="RRM_dom"/>
</dbReference>
<dbReference type="InterPro" id="IPR034244">
    <property type="entry name" value="Rrt5_RRM1"/>
</dbReference>
<dbReference type="InterPro" id="IPR034247">
    <property type="entry name" value="Rrt5_RRM2"/>
</dbReference>
<dbReference type="InterPro" id="IPR050374">
    <property type="entry name" value="RRT5_SRSF_SR"/>
</dbReference>
<dbReference type="PANTHER" id="PTHR23003:SF54">
    <property type="entry name" value="REGULATOR OF RDNA TRANSCRIPTION PROTEIN 5"/>
    <property type="match status" value="1"/>
</dbReference>
<dbReference type="PANTHER" id="PTHR23003">
    <property type="entry name" value="RNA RECOGNITION MOTIF RRM DOMAIN CONTAINING PROTEIN"/>
    <property type="match status" value="1"/>
</dbReference>
<dbReference type="Pfam" id="PF00076">
    <property type="entry name" value="RRM_1"/>
    <property type="match status" value="2"/>
</dbReference>
<dbReference type="SMART" id="SM00360">
    <property type="entry name" value="RRM"/>
    <property type="match status" value="2"/>
</dbReference>
<dbReference type="SUPFAM" id="SSF54928">
    <property type="entry name" value="RNA-binding domain, RBD"/>
    <property type="match status" value="1"/>
</dbReference>
<dbReference type="PROSITE" id="PS50102">
    <property type="entry name" value="RRM"/>
    <property type="match status" value="2"/>
</dbReference>
<feature type="chain" id="PRO_0000404354" description="Regulator of rDNA transcription protein 5">
    <location>
        <begin position="1"/>
        <end position="466"/>
    </location>
</feature>
<feature type="domain" description="RRM 1" evidence="2">
    <location>
        <begin position="49"/>
        <end position="132"/>
    </location>
</feature>
<feature type="domain" description="RRM 2" evidence="2">
    <location>
        <begin position="188"/>
        <end position="270"/>
    </location>
</feature>
<feature type="region of interest" description="Disordered" evidence="3">
    <location>
        <begin position="1"/>
        <end position="33"/>
    </location>
</feature>
<feature type="region of interest" description="Disordered" evidence="3">
    <location>
        <begin position="311"/>
        <end position="347"/>
    </location>
</feature>
<feature type="region of interest" description="Disordered" evidence="3">
    <location>
        <begin position="406"/>
        <end position="466"/>
    </location>
</feature>
<feature type="compositionally biased region" description="Low complexity" evidence="3">
    <location>
        <begin position="17"/>
        <end position="26"/>
    </location>
</feature>
<feature type="compositionally biased region" description="Polar residues" evidence="3">
    <location>
        <begin position="317"/>
        <end position="336"/>
    </location>
</feature>
<feature type="compositionally biased region" description="Low complexity" evidence="3">
    <location>
        <begin position="410"/>
        <end position="456"/>
    </location>
</feature>
<sequence length="466" mass="52326">MSDQPAQSDLPDQGALPPQEAAQPQAVREDPQPQQCAQQVLFEQQGAQHRVYISNLSQDATEEALTEFLKDFHPVSVLIPSQSVRGFQKTSVRPLGIAYVEFKDADTAAKVILELNGVTFMDRELRLRYHIPFKSEKEKLARGPNKFRQIQRRLSELRRRNSDAGATVTTDNGPQVDAAAVPREMSKVTIYVGRLPGRTTDKDLRTYFHEYLPQEIIVFKHRQFRGWRIRRHVTAAVITFPDHERQESALESLSNLPFNGRTVRMAPAFEDKLAEIRAEVQRMAVEQQLPQPASNLGIYIGNNLIAMQPLQTRKADQQSLQSQHSPQNAAEDQTITAPPPSQQQLPQLQPIAPPLSLQPLNPVENTQPVQGLDLSIPREHEEVVRGQPLLRLQKLQMIQRLQRLHRQKQRQQIQQEPAAQPAAQPAAQPATEAAVAPQLVPEQEAHQAAAQAEPQQVLERPIAAGA</sequence>
<reference key="1">
    <citation type="journal article" date="2004" name="Science">
        <title>The Ashbya gossypii genome as a tool for mapping the ancient Saccharomyces cerevisiae genome.</title>
        <authorList>
            <person name="Dietrich F.S."/>
            <person name="Voegeli S."/>
            <person name="Brachat S."/>
            <person name="Lerch A."/>
            <person name="Gates K."/>
            <person name="Steiner S."/>
            <person name="Mohr C."/>
            <person name="Poehlmann R."/>
            <person name="Luedi P."/>
            <person name="Choi S."/>
            <person name="Wing R.A."/>
            <person name="Flavier A."/>
            <person name="Gaffney T.D."/>
            <person name="Philippsen P."/>
        </authorList>
    </citation>
    <scope>NUCLEOTIDE SEQUENCE [LARGE SCALE GENOMIC DNA]</scope>
    <source>
        <strain>ATCC 10895 / CBS 109.51 / FGSC 9923 / NRRL Y-1056</strain>
    </source>
</reference>
<reference key="2">
    <citation type="journal article" date="2013" name="G3 (Bethesda)">
        <title>Genomes of Ashbya fungi isolated from insects reveal four mating-type loci, numerous translocations, lack of transposons, and distinct gene duplications.</title>
        <authorList>
            <person name="Dietrich F.S."/>
            <person name="Voegeli S."/>
            <person name="Kuo S."/>
            <person name="Philippsen P."/>
        </authorList>
    </citation>
    <scope>GENOME REANNOTATION</scope>
    <source>
        <strain>ATCC 10895 / CBS 109.51 / FGSC 9923 / NRRL Y-1056</strain>
    </source>
</reference>
<evidence type="ECO:0000250" key="1"/>
<evidence type="ECO:0000255" key="2">
    <source>
        <dbReference type="PROSITE-ProRule" id="PRU00176"/>
    </source>
</evidence>
<evidence type="ECO:0000256" key="3">
    <source>
        <dbReference type="SAM" id="MobiDB-lite"/>
    </source>
</evidence>
<evidence type="ECO:0000305" key="4"/>
<name>RRT5_EREGS</name>
<organism>
    <name type="scientific">Eremothecium gossypii (strain ATCC 10895 / CBS 109.51 / FGSC 9923 / NRRL Y-1056)</name>
    <name type="common">Yeast</name>
    <name type="synonym">Ashbya gossypii</name>
    <dbReference type="NCBI Taxonomy" id="284811"/>
    <lineage>
        <taxon>Eukaryota</taxon>
        <taxon>Fungi</taxon>
        <taxon>Dikarya</taxon>
        <taxon>Ascomycota</taxon>
        <taxon>Saccharomycotina</taxon>
        <taxon>Saccharomycetes</taxon>
        <taxon>Saccharomycetales</taxon>
        <taxon>Saccharomycetaceae</taxon>
        <taxon>Eremothecium</taxon>
    </lineage>
</organism>
<gene>
    <name type="primary">RRT5</name>
    <name type="ordered locus">ADL126C</name>
</gene>
<proteinExistence type="inferred from homology"/>
<keyword id="KW-1185">Reference proteome</keyword>
<keyword id="KW-0677">Repeat</keyword>
<keyword id="KW-0694">RNA-binding</keyword>
<keyword id="KW-0804">Transcription</keyword>
<keyword id="KW-0805">Transcription regulation</keyword>